<proteinExistence type="evidence at transcript level"/>
<feature type="chain" id="PRO_0000191653" description="GTP-binding protein Di-Ras2">
    <location>
        <begin position="1"/>
        <end position="196"/>
    </location>
</feature>
<feature type="propeptide" id="PRO_0000370780" description="Removed in mature form" evidence="3">
    <location>
        <begin position="197"/>
        <end position="199"/>
    </location>
</feature>
<feature type="short sequence motif" description="Effector region" evidence="3">
    <location>
        <begin position="36"/>
        <end position="44"/>
    </location>
</feature>
<feature type="binding site" evidence="2">
    <location>
        <begin position="14"/>
        <end position="21"/>
    </location>
    <ligand>
        <name>GTP</name>
        <dbReference type="ChEBI" id="CHEBI:37565"/>
    </ligand>
</feature>
<feature type="binding site" evidence="2">
    <location>
        <begin position="33"/>
        <end position="39"/>
    </location>
    <ligand>
        <name>GTP</name>
        <dbReference type="ChEBI" id="CHEBI:37565"/>
    </ligand>
</feature>
<feature type="binding site" evidence="2">
    <location>
        <begin position="61"/>
        <end position="65"/>
    </location>
    <ligand>
        <name>GTP</name>
        <dbReference type="ChEBI" id="CHEBI:37565"/>
    </ligand>
</feature>
<feature type="binding site" evidence="2">
    <location>
        <begin position="121"/>
        <end position="124"/>
    </location>
    <ligand>
        <name>GTP</name>
        <dbReference type="ChEBI" id="CHEBI:37565"/>
    </ligand>
</feature>
<feature type="binding site" evidence="2">
    <location>
        <begin position="152"/>
        <end position="153"/>
    </location>
    <ligand>
        <name>GTP</name>
        <dbReference type="ChEBI" id="CHEBI:37565"/>
    </ligand>
</feature>
<feature type="modified residue" description="Phosphoserine" evidence="1">
    <location>
        <position position="35"/>
    </location>
</feature>
<feature type="modified residue" description="Phosphoserine" evidence="1">
    <location>
        <position position="126"/>
    </location>
</feature>
<feature type="modified residue" description="Cysteine methyl ester" evidence="4">
    <location>
        <position position="196"/>
    </location>
</feature>
<feature type="lipid moiety-binding region" description="S-geranylgeranyl cysteine" evidence="4">
    <location>
        <position position="196"/>
    </location>
</feature>
<accession>Q5R6S2</accession>
<evidence type="ECO:0000250" key="1">
    <source>
        <dbReference type="UniProtKB" id="Q5PR73"/>
    </source>
</evidence>
<evidence type="ECO:0000250" key="2">
    <source>
        <dbReference type="UniProtKB" id="Q96HU8"/>
    </source>
</evidence>
<evidence type="ECO:0000255" key="3"/>
<evidence type="ECO:0000305" key="4"/>
<comment type="function">
    <text evidence="2">Displays low GTPase activity and exists predominantly in the GTP-bound form.</text>
</comment>
<comment type="catalytic activity">
    <reaction evidence="2">
        <text>GTP + H2O = GDP + phosphate + H(+)</text>
        <dbReference type="Rhea" id="RHEA:19669"/>
        <dbReference type="ChEBI" id="CHEBI:15377"/>
        <dbReference type="ChEBI" id="CHEBI:15378"/>
        <dbReference type="ChEBI" id="CHEBI:37565"/>
        <dbReference type="ChEBI" id="CHEBI:43474"/>
        <dbReference type="ChEBI" id="CHEBI:58189"/>
    </reaction>
</comment>
<comment type="subcellular location">
    <subcellularLocation>
        <location evidence="2">Cell membrane</location>
        <topology evidence="2">Lipid-anchor</topology>
        <orientation evidence="2">Cytoplasmic side</orientation>
    </subcellularLocation>
</comment>
<comment type="PTM">
    <text evidence="2">Ubiquitinated by the ECS(ASB11) complex via 'Lys-11'-linked ubiquitin chains, leading to its degradation by the proteasome.</text>
</comment>
<comment type="similarity">
    <text evidence="4">Belongs to the small GTPase superfamily. Di-Ras family.</text>
</comment>
<name>DIRA2_PONAB</name>
<sequence length="199" mass="22513">MPEQSNDYRVAVFGAGGVGKSSLVLRFVKGTFRESYIPTVEDTYRRVISCDKSICTLQITDTTGSHQFPAMQRLSISKGHAFILVYSITSRQSLEELKPIYEQICEIKGDVESIPIMLVGNKCDESPSREVQSSEAEALARTWKCAFMETSAKLNHNVKELFQELLNLEKRRTVSLQIDGKKSKQQKRKEKLKGKCVIM</sequence>
<dbReference type="EC" id="3.6.5.-" evidence="2"/>
<dbReference type="EMBL" id="CR860413">
    <property type="protein sequence ID" value="CAH92538.1"/>
    <property type="molecule type" value="mRNA"/>
</dbReference>
<dbReference type="RefSeq" id="NP_001126486.1">
    <property type="nucleotide sequence ID" value="NM_001133014.1"/>
</dbReference>
<dbReference type="SMR" id="Q5R6S2"/>
<dbReference type="STRING" id="9601.ENSPPYP00000021700"/>
<dbReference type="GeneID" id="100173473"/>
<dbReference type="KEGG" id="pon:100173473"/>
<dbReference type="CTD" id="54769"/>
<dbReference type="eggNOG" id="KOG0395">
    <property type="taxonomic scope" value="Eukaryota"/>
</dbReference>
<dbReference type="InParanoid" id="Q5R6S2"/>
<dbReference type="OrthoDB" id="265044at2759"/>
<dbReference type="Proteomes" id="UP000001595">
    <property type="component" value="Unplaced"/>
</dbReference>
<dbReference type="GO" id="GO:0005886">
    <property type="term" value="C:plasma membrane"/>
    <property type="evidence" value="ECO:0007669"/>
    <property type="project" value="UniProtKB-SubCell"/>
</dbReference>
<dbReference type="GO" id="GO:0005525">
    <property type="term" value="F:GTP binding"/>
    <property type="evidence" value="ECO:0007669"/>
    <property type="project" value="UniProtKB-KW"/>
</dbReference>
<dbReference type="GO" id="GO:0003924">
    <property type="term" value="F:GTPase activity"/>
    <property type="evidence" value="ECO:0007669"/>
    <property type="project" value="InterPro"/>
</dbReference>
<dbReference type="GO" id="GO:0007165">
    <property type="term" value="P:signal transduction"/>
    <property type="evidence" value="ECO:0007669"/>
    <property type="project" value="InterPro"/>
</dbReference>
<dbReference type="CDD" id="cd04140">
    <property type="entry name" value="ARHI_like"/>
    <property type="match status" value="1"/>
</dbReference>
<dbReference type="FunFam" id="3.40.50.300:FF:000303">
    <property type="entry name" value="GTP-binding protein Di-Ras2"/>
    <property type="match status" value="1"/>
</dbReference>
<dbReference type="Gene3D" id="3.40.50.300">
    <property type="entry name" value="P-loop containing nucleotide triphosphate hydrolases"/>
    <property type="match status" value="1"/>
</dbReference>
<dbReference type="InterPro" id="IPR027417">
    <property type="entry name" value="P-loop_NTPase"/>
</dbReference>
<dbReference type="InterPro" id="IPR005225">
    <property type="entry name" value="Small_GTP-bd"/>
</dbReference>
<dbReference type="InterPro" id="IPR001806">
    <property type="entry name" value="Small_GTPase"/>
</dbReference>
<dbReference type="InterPro" id="IPR020849">
    <property type="entry name" value="Small_GTPase_Ras-type"/>
</dbReference>
<dbReference type="NCBIfam" id="TIGR00231">
    <property type="entry name" value="small_GTP"/>
    <property type="match status" value="1"/>
</dbReference>
<dbReference type="PANTHER" id="PTHR24070">
    <property type="entry name" value="RAS, DI-RAS, AND RHEB FAMILY MEMBERS OF SMALL GTPASE SUPERFAMILY"/>
    <property type="match status" value="1"/>
</dbReference>
<dbReference type="Pfam" id="PF00071">
    <property type="entry name" value="Ras"/>
    <property type="match status" value="1"/>
</dbReference>
<dbReference type="PRINTS" id="PR00449">
    <property type="entry name" value="RASTRNSFRMNG"/>
</dbReference>
<dbReference type="SMART" id="SM00175">
    <property type="entry name" value="RAB"/>
    <property type="match status" value="1"/>
</dbReference>
<dbReference type="SMART" id="SM00173">
    <property type="entry name" value="RAS"/>
    <property type="match status" value="1"/>
</dbReference>
<dbReference type="SMART" id="SM00174">
    <property type="entry name" value="RHO"/>
    <property type="match status" value="1"/>
</dbReference>
<dbReference type="SUPFAM" id="SSF52540">
    <property type="entry name" value="P-loop containing nucleoside triphosphate hydrolases"/>
    <property type="match status" value="1"/>
</dbReference>
<dbReference type="PROSITE" id="PS51421">
    <property type="entry name" value="RAS"/>
    <property type="match status" value="1"/>
</dbReference>
<keyword id="KW-1003">Cell membrane</keyword>
<keyword id="KW-0342">GTP-binding</keyword>
<keyword id="KW-0378">Hydrolase</keyword>
<keyword id="KW-0449">Lipoprotein</keyword>
<keyword id="KW-0472">Membrane</keyword>
<keyword id="KW-0488">Methylation</keyword>
<keyword id="KW-0547">Nucleotide-binding</keyword>
<keyword id="KW-0597">Phosphoprotein</keyword>
<keyword id="KW-0636">Prenylation</keyword>
<keyword id="KW-1185">Reference proteome</keyword>
<keyword id="KW-0832">Ubl conjugation</keyword>
<protein>
    <recommendedName>
        <fullName>GTP-binding protein Di-Ras2</fullName>
        <ecNumber evidence="2">3.6.5.-</ecNumber>
    </recommendedName>
    <alternativeName>
        <fullName>Distinct subgroup of the Ras family member 2</fullName>
    </alternativeName>
</protein>
<organism>
    <name type="scientific">Pongo abelii</name>
    <name type="common">Sumatran orangutan</name>
    <name type="synonym">Pongo pygmaeus abelii</name>
    <dbReference type="NCBI Taxonomy" id="9601"/>
    <lineage>
        <taxon>Eukaryota</taxon>
        <taxon>Metazoa</taxon>
        <taxon>Chordata</taxon>
        <taxon>Craniata</taxon>
        <taxon>Vertebrata</taxon>
        <taxon>Euteleostomi</taxon>
        <taxon>Mammalia</taxon>
        <taxon>Eutheria</taxon>
        <taxon>Euarchontoglires</taxon>
        <taxon>Primates</taxon>
        <taxon>Haplorrhini</taxon>
        <taxon>Catarrhini</taxon>
        <taxon>Hominidae</taxon>
        <taxon>Pongo</taxon>
    </lineage>
</organism>
<gene>
    <name type="primary">DIRAS2</name>
</gene>
<reference key="1">
    <citation type="submission" date="2004-11" db="EMBL/GenBank/DDBJ databases">
        <authorList>
            <consortium name="The German cDNA consortium"/>
        </authorList>
    </citation>
    <scope>NUCLEOTIDE SEQUENCE [LARGE SCALE MRNA]</scope>
    <source>
        <tissue>Brain cortex</tissue>
    </source>
</reference>